<reference key="1">
    <citation type="journal article" date="1997" name="EMBO J.">
        <title>New structure and function in plant K+ channels: KCO1, an outward rectifier with a steep Ca2+ dependency.</title>
        <authorList>
            <person name="Czempinski K."/>
            <person name="Zimmermann S."/>
            <person name="Ehrhardt T."/>
            <person name="Mueller-Roeber B."/>
        </authorList>
    </citation>
    <scope>NUCLEOTIDE SEQUENCE [GENOMIC DNA / MRNA]</scope>
    <scope>CHARACTERIZATION</scope>
    <source>
        <strain>cv. C24</strain>
    </source>
</reference>
<reference key="2">
    <citation type="journal article" date="1997" name="EMBO J.">
        <authorList>
            <person name="Czempinski K."/>
            <person name="Zimmermann S."/>
            <person name="Ehrhardt T."/>
            <person name="Mueller-Roeber B."/>
        </authorList>
    </citation>
    <scope>ERRATUM OF PUBMED:9184204</scope>
</reference>
<reference key="3">
    <citation type="journal article" date="2002" name="Plant J.">
        <title>Vacuolar membrane localization of the Arabidopsis 'two-pore' K+ channel KCO1.</title>
        <authorList>
            <person name="Czempinski K."/>
            <person name="Frachisse J.-M."/>
            <person name="Maurel C."/>
            <person name="Barbier-Brygoo H."/>
            <person name="Mueller-Roeber B."/>
        </authorList>
    </citation>
    <scope>NUCLEOTIDE SEQUENCE [GENOMIC DNA]</scope>
    <scope>SUBCELLULAR LOCATION</scope>
    <scope>TISSUE SPECIFICITY</scope>
    <source>
        <strain>cv. C24</strain>
    </source>
</reference>
<reference key="4">
    <citation type="journal article" date="1998" name="DNA Res.">
        <title>Structural analysis of Arabidopsis thaliana chromosome 5. IV. Sequence features of the regions of 1,456,315 bp covered by nineteen physically assigned P1 and TAC clones.</title>
        <authorList>
            <person name="Sato S."/>
            <person name="Kaneko T."/>
            <person name="Kotani H."/>
            <person name="Nakamura Y."/>
            <person name="Asamizu E."/>
            <person name="Miyajima N."/>
            <person name="Tabata S."/>
        </authorList>
    </citation>
    <scope>NUCLEOTIDE SEQUENCE [LARGE SCALE GENOMIC DNA]</scope>
    <source>
        <strain>cv. Columbia</strain>
    </source>
</reference>
<reference key="5">
    <citation type="journal article" date="2017" name="Plant J.">
        <title>Araport11: a complete reannotation of the Arabidopsis thaliana reference genome.</title>
        <authorList>
            <person name="Cheng C.Y."/>
            <person name="Krishnakumar V."/>
            <person name="Chan A.P."/>
            <person name="Thibaud-Nissen F."/>
            <person name="Schobel S."/>
            <person name="Town C.D."/>
        </authorList>
    </citation>
    <scope>GENOME REANNOTATION</scope>
    <source>
        <strain>cv. Columbia</strain>
    </source>
</reference>
<reference key="6">
    <citation type="submission" date="2006-07" db="EMBL/GenBank/DDBJ databases">
        <title>Large-scale analysis of RIKEN Arabidopsis full-length (RAFL) cDNAs.</title>
        <authorList>
            <person name="Totoki Y."/>
            <person name="Seki M."/>
            <person name="Ishida J."/>
            <person name="Nakajima M."/>
            <person name="Enju A."/>
            <person name="Kamiya A."/>
            <person name="Narusaka M."/>
            <person name="Shin-i T."/>
            <person name="Nakagawa M."/>
            <person name="Sakamoto N."/>
            <person name="Oishi K."/>
            <person name="Kohara Y."/>
            <person name="Kobayashi M."/>
            <person name="Toyoda A."/>
            <person name="Sakaki Y."/>
            <person name="Sakurai T."/>
            <person name="Iida K."/>
            <person name="Akiyama K."/>
            <person name="Satou M."/>
            <person name="Toyoda T."/>
            <person name="Konagaya A."/>
            <person name="Carninci P."/>
            <person name="Kawai J."/>
            <person name="Hayashizaki Y."/>
            <person name="Shinozaki K."/>
        </authorList>
    </citation>
    <scope>NUCLEOTIDE SEQUENCE [LARGE SCALE MRNA]</scope>
    <source>
        <strain>cv. Columbia</strain>
    </source>
</reference>
<reference key="7">
    <citation type="submission" date="2002-03" db="EMBL/GenBank/DDBJ databases">
        <title>Full-length cDNA from Arabidopsis thaliana.</title>
        <authorList>
            <person name="Brover V.V."/>
            <person name="Troukhan M.E."/>
            <person name="Alexandrov N.A."/>
            <person name="Lu Y.-P."/>
            <person name="Flavell R.B."/>
            <person name="Feldmann K.A."/>
        </authorList>
    </citation>
    <scope>NUCLEOTIDE SEQUENCE [LARGE SCALE MRNA]</scope>
</reference>
<reference key="8">
    <citation type="journal article" date="2001" name="Plant Physiol.">
        <title>Phylogenetic relationships within cation transporter families of Arabidopsis.</title>
        <authorList>
            <person name="Maeser P."/>
            <person name="Thomine S."/>
            <person name="Schroeder J.I."/>
            <person name="Ward J.M."/>
            <person name="Hirschi K."/>
            <person name="Sze H."/>
            <person name="Talke I.N."/>
            <person name="Amtmann A."/>
            <person name="Maathuis F.J.M."/>
            <person name="Sanders D."/>
            <person name="Harper J.F."/>
            <person name="Tchieu J."/>
            <person name="Gribskov M."/>
            <person name="Persans M.W."/>
            <person name="Salt D.E."/>
            <person name="Kim S.A."/>
            <person name="Guerinot M.L."/>
        </authorList>
    </citation>
    <scope>GENE FAMILY</scope>
    <scope>NOMENCLATURE</scope>
</reference>
<reference key="9">
    <citation type="journal article" date="2002" name="FEBS Lett.">
        <title>KCO1 is a component of the slow-vacuolar (SV) ion channel.</title>
        <authorList>
            <person name="Schoenknecht G."/>
            <person name="Spoormaker P."/>
            <person name="Steinmeyer R."/>
            <person name="Brueggeman L."/>
            <person name="Ache P."/>
            <person name="Dutta R."/>
            <person name="Reintanz B."/>
            <person name="Godde M."/>
            <person name="Hedrich R."/>
            <person name="Palme K."/>
        </authorList>
    </citation>
    <scope>CHARACTERIZATION</scope>
    <scope>NULL MUTANT KCO1-7</scope>
</reference>
<reference key="10">
    <citation type="journal article" date="2004" name="Proc. Natl. Acad. Sci. U.S.A.">
        <title>AtTPK4, an Arabidopsis tandem-pore K+ channel, poised to control the pollen membrane voltage in a pH- and Ca2+-dependent manner.</title>
        <authorList>
            <person name="Becker D."/>
            <person name="Geiger D."/>
            <person name="Dunkel M."/>
            <person name="Roller A."/>
            <person name="Bertl A."/>
            <person name="Latz A."/>
            <person name="Carpaneto A."/>
            <person name="Dietrich P."/>
            <person name="Roelfsema M.R."/>
            <person name="Voelker C."/>
            <person name="Schmidt D."/>
            <person name="Mueller-Roeber B."/>
            <person name="Czempinski K."/>
            <person name="Hedrich R."/>
        </authorList>
    </citation>
    <scope>GENE FAMILY</scope>
    <scope>NOMENCLATURE</scope>
</reference>
<reference key="11">
    <citation type="journal article" date="2005" name="Plant Physiol.">
        <title>TPK1 is a vacuolar ion channel different from the slow-vacuolar cation channel.</title>
        <authorList>
            <person name="Bihler H."/>
            <person name="Eing C."/>
            <person name="Hebeisen S."/>
            <person name="Roller A."/>
            <person name="Czempinski K."/>
            <person name="Bertl A."/>
        </authorList>
    </citation>
    <scope>FUNCTION</scope>
    <scope>ACTIVITY REGULATION</scope>
</reference>
<reference key="12">
    <citation type="journal article" date="2006" name="Plant J.">
        <title>Members of the Arabidopsis AtTPK/KCO family form homomeric vacuolar channels in planta.</title>
        <authorList>
            <person name="Voelker C."/>
            <person name="Schmidt D."/>
            <person name="Mueller-Roeber B."/>
            <person name="Czempinski K."/>
        </authorList>
    </citation>
    <scope>TISSUE SPECIFICITY</scope>
    <scope>SUBUNIT</scope>
</reference>
<reference key="13">
    <citation type="journal article" date="2007" name="Plant J.">
        <title>TPK1, a Ca(2+)-regulated Arabidopsis vacuole two-pore K(+) channel is activated by 14-3-3 proteins.</title>
        <authorList>
            <person name="Latz A."/>
            <person name="Becker D."/>
            <person name="Hekman M."/>
            <person name="Mueller T."/>
            <person name="Beyhl D."/>
            <person name="Marten I."/>
            <person name="Eing C."/>
            <person name="Fischer A."/>
            <person name="Dunkel M."/>
            <person name="Bertl A."/>
            <person name="Rapp U.R."/>
            <person name="Hedrich R."/>
        </authorList>
    </citation>
    <scope>FUNCTION</scope>
    <scope>INTERACTION WITH GRF1 AND GRF6</scope>
    <scope>MUTAGENESIS OF SER-42</scope>
    <scope>PHOSPHORYLATION</scope>
    <scope>3D-STRUCTURE MODELING</scope>
</reference>
<reference key="14">
    <citation type="journal article" date="2007" name="Proc. Natl. Acad. Sci. U.S.A.">
        <title>The two-pore channel TPK1 gene encodes the vacuolar K+ conductance and plays a role in K+ homeostasis.</title>
        <authorList>
            <person name="Gobert A."/>
            <person name="Isayenkov S."/>
            <person name="Voelker C."/>
            <person name="Czempinski K."/>
            <person name="Maathuis F.J."/>
        </authorList>
    </citation>
    <scope>FUNCTION</scope>
    <scope>DISRUPTION PHENOTYPE</scope>
    <scope>ACTIVITY REGULATION</scope>
    <source>
        <strain>cv. Columbia</strain>
    </source>
</reference>
<reference key="15">
    <citation type="journal article" date="2008" name="Mol. Plant">
        <title>Targeting of vacuolar membrane localized members of the TPK channel family.</title>
        <authorList>
            <person name="Dunkel M."/>
            <person name="Latz A."/>
            <person name="Schumacher K."/>
            <person name="Mueller T."/>
            <person name="Becker D."/>
            <person name="Hedrich R."/>
        </authorList>
    </citation>
    <scope>SUBCELLULAR LOCATION</scope>
    <scope>MUTAGENESIS OF 296-ASP--GLU-298 AND 301-ASP--ASP-303</scope>
</reference>
<reference key="16">
    <citation type="journal article" date="2011" name="Plant Physiol.">
        <title>Assembly and sorting of the tonoplast potassium channel AtTPK1 and its turnover by internalization into the vacuole.</title>
        <authorList>
            <person name="Maitrejean M."/>
            <person name="Wudick M.M."/>
            <person name="Voelker C."/>
            <person name="Prinsi B."/>
            <person name="Mueller-Roeber B."/>
            <person name="Czempinski K."/>
            <person name="Pedrazzini E."/>
            <person name="Vitale A."/>
        </authorList>
    </citation>
    <scope>FUNCTION</scope>
    <scope>SUBUNIT</scope>
    <scope>SUBCELLULAR LOCATION</scope>
    <scope>GLYCOSYLATION</scope>
    <source>
        <strain>cv. Columbia</strain>
    </source>
</reference>
<dbReference type="EMBL" id="X97323">
    <property type="protein sequence ID" value="CAA65988.1"/>
    <property type="molecule type" value="mRNA"/>
</dbReference>
<dbReference type="EMBL" id="Y07825">
    <property type="protein sequence ID" value="CAA69158.1"/>
    <property type="molecule type" value="Genomic_DNA"/>
</dbReference>
<dbReference type="EMBL" id="AB009050">
    <property type="protein sequence ID" value="BAB09230.1"/>
    <property type="molecule type" value="Genomic_DNA"/>
</dbReference>
<dbReference type="EMBL" id="CP002688">
    <property type="protein sequence ID" value="AED96660.1"/>
    <property type="molecule type" value="Genomic_DNA"/>
</dbReference>
<dbReference type="EMBL" id="CP002688">
    <property type="protein sequence ID" value="AED96661.1"/>
    <property type="molecule type" value="Genomic_DNA"/>
</dbReference>
<dbReference type="EMBL" id="AK229302">
    <property type="protein sequence ID" value="BAF01165.1"/>
    <property type="molecule type" value="mRNA"/>
</dbReference>
<dbReference type="EMBL" id="AY087147">
    <property type="protein sequence ID" value="AAM64705.1"/>
    <property type="molecule type" value="mRNA"/>
</dbReference>
<dbReference type="RefSeq" id="NP_200374.1">
    <property type="nucleotide sequence ID" value="NM_124945.4"/>
</dbReference>
<dbReference type="RefSeq" id="NP_851196.1">
    <property type="nucleotide sequence ID" value="NM_180865.1"/>
</dbReference>
<dbReference type="SMR" id="Q8LBL1"/>
<dbReference type="BioGRID" id="20901">
    <property type="interactions" value="27"/>
</dbReference>
<dbReference type="FunCoup" id="Q8LBL1">
    <property type="interactions" value="212"/>
</dbReference>
<dbReference type="IntAct" id="Q8LBL1">
    <property type="interactions" value="22"/>
</dbReference>
<dbReference type="STRING" id="3702.Q8LBL1"/>
<dbReference type="TCDB" id="1.A.1.7.3">
    <property type="family name" value="the voltage-gated ion channel (vic) superfamily"/>
</dbReference>
<dbReference type="iPTMnet" id="Q8LBL1"/>
<dbReference type="PaxDb" id="3702-AT5G55630.1"/>
<dbReference type="ProteomicsDB" id="250632"/>
<dbReference type="EnsemblPlants" id="AT5G55630.1">
    <property type="protein sequence ID" value="AT5G55630.1"/>
    <property type="gene ID" value="AT5G55630"/>
</dbReference>
<dbReference type="EnsemblPlants" id="AT5G55630.2">
    <property type="protein sequence ID" value="AT5G55630.2"/>
    <property type="gene ID" value="AT5G55630"/>
</dbReference>
<dbReference type="GeneID" id="835657"/>
<dbReference type="Gramene" id="AT5G55630.1">
    <property type="protein sequence ID" value="AT5G55630.1"/>
    <property type="gene ID" value="AT5G55630"/>
</dbReference>
<dbReference type="Gramene" id="AT5G55630.2">
    <property type="protein sequence ID" value="AT5G55630.2"/>
    <property type="gene ID" value="AT5G55630"/>
</dbReference>
<dbReference type="KEGG" id="ath:AT5G55630"/>
<dbReference type="Araport" id="AT5G55630"/>
<dbReference type="TAIR" id="AT5G55630">
    <property type="gene designation" value="KCO1"/>
</dbReference>
<dbReference type="eggNOG" id="KOG1418">
    <property type="taxonomic scope" value="Eukaryota"/>
</dbReference>
<dbReference type="HOGENOM" id="CLU_033675_0_1_1"/>
<dbReference type="InParanoid" id="Q8LBL1"/>
<dbReference type="OMA" id="TICLAQC"/>
<dbReference type="PhylomeDB" id="Q8LBL1"/>
<dbReference type="BioCyc" id="ARA:AT5G55630-MONOMER"/>
<dbReference type="BioCyc" id="MetaCyc:MONOMER-14554"/>
<dbReference type="PRO" id="PR:Q8LBL1"/>
<dbReference type="Proteomes" id="UP000006548">
    <property type="component" value="Chromosome 5"/>
</dbReference>
<dbReference type="ExpressionAtlas" id="Q8LBL1">
    <property type="expression patterns" value="baseline and differential"/>
</dbReference>
<dbReference type="GO" id="GO:0005774">
    <property type="term" value="C:vacuolar membrane"/>
    <property type="evidence" value="ECO:0000314"/>
    <property type="project" value="TAIR"/>
</dbReference>
<dbReference type="GO" id="GO:0046872">
    <property type="term" value="F:metal ion binding"/>
    <property type="evidence" value="ECO:0007669"/>
    <property type="project" value="UniProtKB-KW"/>
</dbReference>
<dbReference type="GO" id="GO:0005216">
    <property type="term" value="F:monoatomic ion channel activity"/>
    <property type="evidence" value="ECO:0000314"/>
    <property type="project" value="TAIR"/>
</dbReference>
<dbReference type="GO" id="GO:0005267">
    <property type="term" value="F:potassium channel activity"/>
    <property type="evidence" value="ECO:0007669"/>
    <property type="project" value="UniProtKB-KW"/>
</dbReference>
<dbReference type="GO" id="GO:0071257">
    <property type="term" value="P:cellular response to electrical stimulus"/>
    <property type="evidence" value="ECO:0000314"/>
    <property type="project" value="TAIR"/>
</dbReference>
<dbReference type="GO" id="GO:0030007">
    <property type="term" value="P:intracellular potassium ion homeostasis"/>
    <property type="evidence" value="ECO:0000315"/>
    <property type="project" value="TAIR"/>
</dbReference>
<dbReference type="GO" id="GO:0097623">
    <property type="term" value="P:potassium ion export across plasma membrane"/>
    <property type="evidence" value="ECO:0000314"/>
    <property type="project" value="TAIR"/>
</dbReference>
<dbReference type="GO" id="GO:1990573">
    <property type="term" value="P:potassium ion import across plasma membrane"/>
    <property type="evidence" value="ECO:0000314"/>
    <property type="project" value="TAIR"/>
</dbReference>
<dbReference type="GO" id="GO:0010029">
    <property type="term" value="P:regulation of seed germination"/>
    <property type="evidence" value="ECO:0000315"/>
    <property type="project" value="TAIR"/>
</dbReference>
<dbReference type="GO" id="GO:0010119">
    <property type="term" value="P:regulation of stomatal movement"/>
    <property type="evidence" value="ECO:0000315"/>
    <property type="project" value="TAIR"/>
</dbReference>
<dbReference type="FunFam" id="1.10.287.70:FF:000127">
    <property type="entry name" value="Calcium-activated outward-rectifying potassium channel 1"/>
    <property type="match status" value="1"/>
</dbReference>
<dbReference type="FunFam" id="1.10.287.70:FF:000128">
    <property type="entry name" value="Two-pore potassium channel 1"/>
    <property type="match status" value="1"/>
</dbReference>
<dbReference type="Gene3D" id="1.10.287.70">
    <property type="match status" value="2"/>
</dbReference>
<dbReference type="InterPro" id="IPR003280">
    <property type="entry name" value="2pore_dom_K_chnl"/>
</dbReference>
<dbReference type="InterPro" id="IPR011992">
    <property type="entry name" value="EF-hand-dom_pair"/>
</dbReference>
<dbReference type="InterPro" id="IPR018247">
    <property type="entry name" value="EF_Hand_1_Ca_BS"/>
</dbReference>
<dbReference type="InterPro" id="IPR013099">
    <property type="entry name" value="K_chnl_dom"/>
</dbReference>
<dbReference type="PANTHER" id="PTHR11003:SF291">
    <property type="entry name" value="IP11374P"/>
    <property type="match status" value="1"/>
</dbReference>
<dbReference type="PANTHER" id="PTHR11003">
    <property type="entry name" value="POTASSIUM CHANNEL, SUBFAMILY K"/>
    <property type="match status" value="1"/>
</dbReference>
<dbReference type="Pfam" id="PF07885">
    <property type="entry name" value="Ion_trans_2"/>
    <property type="match status" value="2"/>
</dbReference>
<dbReference type="PRINTS" id="PR01333">
    <property type="entry name" value="2POREKCHANEL"/>
</dbReference>
<dbReference type="SUPFAM" id="SSF47473">
    <property type="entry name" value="EF-hand"/>
    <property type="match status" value="1"/>
</dbReference>
<dbReference type="SUPFAM" id="SSF81324">
    <property type="entry name" value="Voltage-gated potassium channels"/>
    <property type="match status" value="2"/>
</dbReference>
<dbReference type="PROSITE" id="PS00018">
    <property type="entry name" value="EF_HAND_1"/>
    <property type="match status" value="2"/>
</dbReference>
<protein>
    <recommendedName>
        <fullName>Two-pore potassium channel 1</fullName>
        <shortName>AtTPK1</shortName>
    </recommendedName>
    <alternativeName>
        <fullName>Calcium-activated outward-rectifying potassium channel 1</fullName>
        <shortName>AtKCO1</shortName>
    </alternativeName>
</protein>
<feature type="chain" id="PRO_0000101775" description="Two-pore potassium channel 1">
    <location>
        <begin position="1"/>
        <end position="363"/>
    </location>
</feature>
<feature type="topological domain" description="Cytoplasmic" evidence="2">
    <location>
        <begin position="1"/>
        <end position="78"/>
    </location>
</feature>
<feature type="transmembrane region" description="Helical" evidence="2">
    <location>
        <begin position="79"/>
        <end position="99"/>
    </location>
</feature>
<feature type="intramembrane region" description="Pore-forming; Name=Pore-forming 1" evidence="2">
    <location>
        <begin position="111"/>
        <end position="130"/>
    </location>
</feature>
<feature type="transmembrane region" description="Helical" evidence="2">
    <location>
        <begin position="137"/>
        <end position="157"/>
    </location>
</feature>
<feature type="topological domain" description="Cytoplasmic" evidence="2">
    <location>
        <begin position="158"/>
        <end position="197"/>
    </location>
</feature>
<feature type="transmembrane region" description="Helical" evidence="2">
    <location>
        <begin position="198"/>
        <end position="218"/>
    </location>
</feature>
<feature type="intramembrane region" description="Pore-forming; Name=Pore-forming 2" evidence="2">
    <location>
        <begin position="225"/>
        <end position="244"/>
    </location>
</feature>
<feature type="transmembrane region" description="Helical" evidence="2">
    <location>
        <begin position="251"/>
        <end position="271"/>
    </location>
</feature>
<feature type="topological domain" description="Cytoplasmic" evidence="2">
    <location>
        <begin position="272"/>
        <end position="363"/>
    </location>
</feature>
<feature type="domain" description="EF-hand 1">
    <location>
        <begin position="288"/>
        <end position="323"/>
    </location>
</feature>
<feature type="domain" description="EF-hand 2">
    <location>
        <begin position="327"/>
        <end position="362"/>
    </location>
</feature>
<feature type="region of interest" description="Disordered" evidence="4">
    <location>
        <begin position="1"/>
        <end position="61"/>
    </location>
</feature>
<feature type="short sequence motif" description="Endoplasmic reticulum release signal">
    <location>
        <begin position="296"/>
        <end position="298"/>
    </location>
</feature>
<feature type="compositionally biased region" description="Basic residues" evidence="4">
    <location>
        <begin position="31"/>
        <end position="42"/>
    </location>
</feature>
<feature type="binding site" evidence="3">
    <location>
        <position position="301"/>
    </location>
    <ligand>
        <name>Ca(2+)</name>
        <dbReference type="ChEBI" id="CHEBI:29108"/>
        <label>1</label>
    </ligand>
</feature>
<feature type="binding site" evidence="3">
    <location>
        <position position="303"/>
    </location>
    <ligand>
        <name>Ca(2+)</name>
        <dbReference type="ChEBI" id="CHEBI:29108"/>
        <label>1</label>
    </ligand>
</feature>
<feature type="binding site" evidence="3">
    <location>
        <position position="305"/>
    </location>
    <ligand>
        <name>Ca(2+)</name>
        <dbReference type="ChEBI" id="CHEBI:29108"/>
        <label>1</label>
    </ligand>
</feature>
<feature type="binding site" evidence="3">
    <location>
        <position position="312"/>
    </location>
    <ligand>
        <name>Ca(2+)</name>
        <dbReference type="ChEBI" id="CHEBI:29108"/>
        <label>1</label>
    </ligand>
</feature>
<feature type="binding site" evidence="3">
    <location>
        <position position="340"/>
    </location>
    <ligand>
        <name>Ca(2+)</name>
        <dbReference type="ChEBI" id="CHEBI:29108"/>
        <label>2</label>
    </ligand>
</feature>
<feature type="binding site" evidence="3">
    <location>
        <position position="342"/>
    </location>
    <ligand>
        <name>Ca(2+)</name>
        <dbReference type="ChEBI" id="CHEBI:29108"/>
        <label>2</label>
    </ligand>
</feature>
<feature type="binding site" evidence="3">
    <location>
        <position position="344"/>
    </location>
    <ligand>
        <name>Ca(2+)</name>
        <dbReference type="ChEBI" id="CHEBI:29108"/>
        <label>2</label>
    </ligand>
</feature>
<feature type="binding site" evidence="3">
    <location>
        <position position="346"/>
    </location>
    <ligand>
        <name>Ca(2+)</name>
        <dbReference type="ChEBI" id="CHEBI:29108"/>
        <label>2</label>
    </ligand>
</feature>
<feature type="binding site" evidence="3">
    <location>
        <position position="351"/>
    </location>
    <ligand>
        <name>Ca(2+)</name>
        <dbReference type="ChEBI" id="CHEBI:29108"/>
        <label>2</label>
    </ligand>
</feature>
<feature type="site" description="Not glycosylated">
    <location>
        <position position="131"/>
    </location>
</feature>
<feature type="mutagenesis site" description="Loss of interaction with GRF6, but no effect on vacuolar targeting." evidence="9">
    <original>S</original>
    <variation>A</variation>
    <location>
        <position position="42"/>
    </location>
</feature>
<feature type="mutagenesis site" description="Retention in the endoplasmic reticulum." evidence="10">
    <original>DLE</original>
    <variation>GLG</variation>
    <location>
        <begin position="296"/>
        <end position="298"/>
    </location>
</feature>
<feature type="mutagenesis site" description="No effect on vacuolar targeting." evidence="10">
    <original>DLD</original>
    <variation>GLG</variation>
    <location>
        <begin position="301"/>
        <end position="303"/>
    </location>
</feature>
<feature type="sequence conflict" description="In Ref. 7; AAM64705." evidence="12" ref="7">
    <original>F</original>
    <variation>V</variation>
    <location>
        <position position="227"/>
    </location>
</feature>
<feature type="sequence conflict" description="In Ref. 1; CAA65988 and 3; CAA69158." evidence="12" ref="1 3">
    <original>S</original>
    <variation>T</variation>
    <location>
        <position position="261"/>
    </location>
</feature>
<gene>
    <name type="primary">TPK1</name>
    <name type="synonym">KCO1</name>
    <name type="ordered locus">At5g55630</name>
    <name type="ORF">MDF20.7</name>
</gene>
<sequence length="363" mass="40727">MSSDAARTPLLPTEKIDTMAQDFNLNSRTSSSRKRRLRRSRSAPRGDCMYNDDVKIDEPPPHPSKIPMFSDLNPNLRRVIMFLALYLTIGTLCFYLVRDQISGHKTSGVVDALYFCIVTMTTVGYGDLVPNSSASRLLACAFVFSGMVLVGHLLSRAADYLVEKQEALLVRAFHLRQSFGPTDILKELHTNKLRYKCYATCLVLVVLFIVGTIFLVMVEKMPVISAFYCVCSTVTTLGYGDKSFNSEAGRLFAVFWILTSSICLAQFFLYVAELNTENKQRALVKWVLTRRITNNDLEAADLDEDGVVGAAEFIVYKLKEMGKIDEKDISGIMDEFEQLDYDESGTLTTSDIVLAQTTSQIQR</sequence>
<keyword id="KW-0106">Calcium</keyword>
<keyword id="KW-0407">Ion channel</keyword>
<keyword id="KW-0406">Ion transport</keyword>
<keyword id="KW-0472">Membrane</keyword>
<keyword id="KW-0479">Metal-binding</keyword>
<keyword id="KW-0597">Phosphoprotein</keyword>
<keyword id="KW-0630">Potassium</keyword>
<keyword id="KW-0631">Potassium channel</keyword>
<keyword id="KW-0633">Potassium transport</keyword>
<keyword id="KW-1185">Reference proteome</keyword>
<keyword id="KW-0677">Repeat</keyword>
<keyword id="KW-0812">Transmembrane</keyword>
<keyword id="KW-1133">Transmembrane helix</keyword>
<keyword id="KW-0813">Transport</keyword>
<keyword id="KW-0926">Vacuole</keyword>
<accession>Q8LBL1</accession>
<accession>O04718</accession>
<accession>Q0WNY4</accession>
<accession>Q9FM75</accession>
<evidence type="ECO:0000250" key="1"/>
<evidence type="ECO:0000255" key="2"/>
<evidence type="ECO:0000255" key="3">
    <source>
        <dbReference type="PROSITE-ProRule" id="PRU10142"/>
    </source>
</evidence>
<evidence type="ECO:0000256" key="4">
    <source>
        <dbReference type="SAM" id="MobiDB-lite"/>
    </source>
</evidence>
<evidence type="ECO:0000269" key="5">
    <source>
    </source>
</evidence>
<evidence type="ECO:0000269" key="6">
    <source>
    </source>
</evidence>
<evidence type="ECO:0000269" key="7">
    <source>
    </source>
</evidence>
<evidence type="ECO:0000269" key="8">
    <source>
    </source>
</evidence>
<evidence type="ECO:0000269" key="9">
    <source>
    </source>
</evidence>
<evidence type="ECO:0000269" key="10">
    <source>
    </source>
</evidence>
<evidence type="ECO:0000269" key="11">
    <source>
    </source>
</evidence>
<evidence type="ECO:0000305" key="12"/>
<organism>
    <name type="scientific">Arabidopsis thaliana</name>
    <name type="common">Mouse-ear cress</name>
    <dbReference type="NCBI Taxonomy" id="3702"/>
    <lineage>
        <taxon>Eukaryota</taxon>
        <taxon>Viridiplantae</taxon>
        <taxon>Streptophyta</taxon>
        <taxon>Embryophyta</taxon>
        <taxon>Tracheophyta</taxon>
        <taxon>Spermatophyta</taxon>
        <taxon>Magnoliopsida</taxon>
        <taxon>eudicotyledons</taxon>
        <taxon>Gunneridae</taxon>
        <taxon>Pentapetalae</taxon>
        <taxon>rosids</taxon>
        <taxon>malvids</taxon>
        <taxon>Brassicales</taxon>
        <taxon>Brassicaceae</taxon>
        <taxon>Camelineae</taxon>
        <taxon>Arabidopsis</taxon>
    </lineage>
</organism>
<proteinExistence type="evidence at protein level"/>
<name>KCO1_ARATH</name>
<comment type="function">
    <text evidence="6 8 9 11">Voltage-independent, large conductance and potassium-selective tonoplast ion channel. Regulated by cytoplasmic calcium and pH. Does not mediate slow-vacuolar (SV) ionic currents, but essential to establish VK currents. Has some permeability for Rb(+) and NH(4)(+), but none for Na(+), Cs(+) or Li(+). Involved in intracellular K(+) redistribution and/or K(+) retranslocation between different tissues.</text>
</comment>
<comment type="activity regulation">
    <text evidence="1 6 8">Could be activated by protein kinase C (By similarity). Strongly induced by calcium. Blocked by barium, tetraethylammonium (TEA), quinine and quinidine.</text>
</comment>
<comment type="subunit">
    <text evidence="7 9 11">Homodimer. Interacts with GRF1 and GRF6, but only GRF6 modulates the channel activity.</text>
</comment>
<comment type="subcellular location">
    <subcellularLocation>
        <location evidence="5 10 11">Vacuole membrane</location>
        <topology evidence="5 10 11">Multi-pass membrane protein</topology>
    </subcellularLocation>
    <text>Tonoplast.</text>
</comment>
<comment type="tissue specificity">
    <text evidence="5 7">Detected in mesophyll cells, guard cells and vascular tissues of the leaves. Expressed in the hilum, where the funiculus is attached during fruit maturation and in the embryo. Also expressed at a lower level in seedlings, root tips and elongation zones, and flowers. Could be detected in mitotically active tissues.</text>
</comment>
<comment type="domain">
    <text>Each of the two pore-forming region (also called P-domain or P-loop) is enclosed by two transmembrane segments (2P/4TM) and contains the GYGD signature motif which seems to be involved in potassium selectivity. The C-terminus (328-363) is required for vacuolar targeting.</text>
</comment>
<comment type="PTM">
    <text evidence="9">Phosphorylation at Ser-42 increases and stabilizes the interaction with 14-3-3 proteins.</text>
</comment>
<comment type="disruption phenotype">
    <text evidence="8">Reduced growth in both high and low K(+) conditions. Slower germination and increased sensitivity to abscisic acid. Reduction of the total tonoplast current density.</text>
</comment>
<comment type="miscellaneous">
    <text>14-3-3 protein binding is not involved in endoplasmic reticulum export and tonoplast targeting.</text>
</comment>
<comment type="similarity">
    <text evidence="12">Belongs to the two pore domain potassium channel (TC 1.A.1.7) family.</text>
</comment>
<comment type="caution">
    <text evidence="12">Was initially described as an outward slow-vacuolar (SV) ion channel (PubMed:11821043, PubMed:9184204).</text>
</comment>